<sequence length="301" mass="33993">MGLDGLAAYLDAYLENIVREGKSEHTVAAYRRDLQELLALLEEMPSANPSNCTRGDFVQALRRLSGRGLGERTLARKLSSWRQYCVWLVKRGLMHADPTADIKPPKQPERVPKALPQEWLNRMLDLPVDGGDPLAVRDHALFELMYGSGLRVSEIHGLNADDVYLDEAWVHVIGKGRKQRQVPLVGKSVEALKNYLPLRQTASDGKALFTGRNGTRLSQRQIQKRLAQWAAQNGDGRHVSPHMMRHSYAGHLLQASRDIRAVQELLGHSSLSTTQIYTKLDFDHIARLYDEAHPRAKRQDE</sequence>
<comment type="function">
    <text evidence="1">Site-specific tyrosine recombinase, which acts by catalyzing the cutting and rejoining of the recombining DNA molecules. The XerC-XerD complex is essential to convert dimers of the bacterial chromosome into monomers to permit their segregation at cell division. It also contributes to the segregational stability of plasmids.</text>
</comment>
<comment type="subunit">
    <text evidence="1">Forms a cyclic heterotetrameric complex composed of two molecules of XerC and two molecules of XerD.</text>
</comment>
<comment type="subcellular location">
    <subcellularLocation>
        <location evidence="1">Cytoplasm</location>
    </subcellularLocation>
</comment>
<comment type="similarity">
    <text evidence="1">Belongs to the 'phage' integrase family. XerC subfamily.</text>
</comment>
<proteinExistence type="inferred from homology"/>
<dbReference type="EMBL" id="AE002098">
    <property type="protein sequence ID" value="AAF42202.1"/>
    <property type="molecule type" value="Genomic_DNA"/>
</dbReference>
<dbReference type="PIR" id="B81032">
    <property type="entry name" value="B81032"/>
</dbReference>
<dbReference type="RefSeq" id="NP_274864.1">
    <property type="nucleotide sequence ID" value="NC_003112.2"/>
</dbReference>
<dbReference type="RefSeq" id="WP_002225783.1">
    <property type="nucleotide sequence ID" value="NC_003112.2"/>
</dbReference>
<dbReference type="SMR" id="Q9JXV6"/>
<dbReference type="FunCoup" id="Q9JXV6">
    <property type="interactions" value="44"/>
</dbReference>
<dbReference type="STRING" id="122586.NMB1868"/>
<dbReference type="PaxDb" id="122586-NMB1868"/>
<dbReference type="KEGG" id="nme:NMB1868"/>
<dbReference type="PATRIC" id="fig|122586.8.peg.2388"/>
<dbReference type="HOGENOM" id="CLU_027562_9_0_4"/>
<dbReference type="InParanoid" id="Q9JXV6"/>
<dbReference type="OrthoDB" id="9801717at2"/>
<dbReference type="Proteomes" id="UP000000425">
    <property type="component" value="Chromosome"/>
</dbReference>
<dbReference type="GO" id="GO:0005737">
    <property type="term" value="C:cytoplasm"/>
    <property type="evidence" value="ECO:0007669"/>
    <property type="project" value="UniProtKB-SubCell"/>
</dbReference>
<dbReference type="GO" id="GO:0048476">
    <property type="term" value="C:Holliday junction resolvase complex"/>
    <property type="evidence" value="ECO:0000318"/>
    <property type="project" value="GO_Central"/>
</dbReference>
<dbReference type="GO" id="GO:0003677">
    <property type="term" value="F:DNA binding"/>
    <property type="evidence" value="ECO:0000318"/>
    <property type="project" value="GO_Central"/>
</dbReference>
<dbReference type="GO" id="GO:0009037">
    <property type="term" value="F:tyrosine-based site-specific recombinase activity"/>
    <property type="evidence" value="ECO:0000318"/>
    <property type="project" value="GO_Central"/>
</dbReference>
<dbReference type="GO" id="GO:0051301">
    <property type="term" value="P:cell division"/>
    <property type="evidence" value="ECO:0007669"/>
    <property type="project" value="UniProtKB-KW"/>
</dbReference>
<dbReference type="GO" id="GO:0007059">
    <property type="term" value="P:chromosome segregation"/>
    <property type="evidence" value="ECO:0000318"/>
    <property type="project" value="GO_Central"/>
</dbReference>
<dbReference type="GO" id="GO:0006310">
    <property type="term" value="P:DNA recombination"/>
    <property type="evidence" value="ECO:0000318"/>
    <property type="project" value="GO_Central"/>
</dbReference>
<dbReference type="GO" id="GO:0006313">
    <property type="term" value="P:DNA transposition"/>
    <property type="evidence" value="ECO:0007669"/>
    <property type="project" value="UniProtKB-UniRule"/>
</dbReference>
<dbReference type="GO" id="GO:0071139">
    <property type="term" value="P:resolution of DNA recombination intermediates"/>
    <property type="evidence" value="ECO:0000318"/>
    <property type="project" value="GO_Central"/>
</dbReference>
<dbReference type="CDD" id="cd00798">
    <property type="entry name" value="INT_XerDC_C"/>
    <property type="match status" value="1"/>
</dbReference>
<dbReference type="Gene3D" id="1.10.150.130">
    <property type="match status" value="1"/>
</dbReference>
<dbReference type="Gene3D" id="1.10.443.10">
    <property type="entry name" value="Intergrase catalytic core"/>
    <property type="match status" value="1"/>
</dbReference>
<dbReference type="HAMAP" id="MF_01808">
    <property type="entry name" value="Recomb_XerC_XerD"/>
    <property type="match status" value="1"/>
</dbReference>
<dbReference type="InterPro" id="IPR044068">
    <property type="entry name" value="CB"/>
</dbReference>
<dbReference type="InterPro" id="IPR011010">
    <property type="entry name" value="DNA_brk_join_enz"/>
</dbReference>
<dbReference type="InterPro" id="IPR013762">
    <property type="entry name" value="Integrase-like_cat_sf"/>
</dbReference>
<dbReference type="InterPro" id="IPR002104">
    <property type="entry name" value="Integrase_catalytic"/>
</dbReference>
<dbReference type="InterPro" id="IPR010998">
    <property type="entry name" value="Integrase_recombinase_N"/>
</dbReference>
<dbReference type="InterPro" id="IPR004107">
    <property type="entry name" value="Integrase_SAM-like_N"/>
</dbReference>
<dbReference type="InterPro" id="IPR011931">
    <property type="entry name" value="Recomb_XerC"/>
</dbReference>
<dbReference type="InterPro" id="IPR023009">
    <property type="entry name" value="Tyrosine_recombinase_XerC/XerD"/>
</dbReference>
<dbReference type="InterPro" id="IPR050090">
    <property type="entry name" value="Tyrosine_recombinase_XerCD"/>
</dbReference>
<dbReference type="NCBIfam" id="TIGR02224">
    <property type="entry name" value="recomb_XerC"/>
    <property type="match status" value="1"/>
</dbReference>
<dbReference type="PANTHER" id="PTHR30349">
    <property type="entry name" value="PHAGE INTEGRASE-RELATED"/>
    <property type="match status" value="1"/>
</dbReference>
<dbReference type="PANTHER" id="PTHR30349:SF81">
    <property type="entry name" value="TYROSINE RECOMBINASE XERC"/>
    <property type="match status" value="1"/>
</dbReference>
<dbReference type="Pfam" id="PF02899">
    <property type="entry name" value="Phage_int_SAM_1"/>
    <property type="match status" value="1"/>
</dbReference>
<dbReference type="Pfam" id="PF00589">
    <property type="entry name" value="Phage_integrase"/>
    <property type="match status" value="1"/>
</dbReference>
<dbReference type="SUPFAM" id="SSF56349">
    <property type="entry name" value="DNA breaking-rejoining enzymes"/>
    <property type="match status" value="1"/>
</dbReference>
<dbReference type="PROSITE" id="PS51900">
    <property type="entry name" value="CB"/>
    <property type="match status" value="1"/>
</dbReference>
<dbReference type="PROSITE" id="PS51898">
    <property type="entry name" value="TYR_RECOMBINASE"/>
    <property type="match status" value="1"/>
</dbReference>
<protein>
    <recommendedName>
        <fullName evidence="1">Tyrosine recombinase XerC</fullName>
    </recommendedName>
</protein>
<feature type="chain" id="PRO_0000095310" description="Tyrosine recombinase XerC">
    <location>
        <begin position="1"/>
        <end position="301"/>
    </location>
</feature>
<feature type="domain" description="Core-binding (CB)" evidence="3">
    <location>
        <begin position="1"/>
        <end position="89"/>
    </location>
</feature>
<feature type="domain" description="Tyr recombinase" evidence="2">
    <location>
        <begin position="110"/>
        <end position="290"/>
    </location>
</feature>
<feature type="active site" evidence="1">
    <location>
        <position position="151"/>
    </location>
</feature>
<feature type="active site" evidence="1">
    <location>
        <position position="175"/>
    </location>
</feature>
<feature type="active site" evidence="1">
    <location>
        <position position="242"/>
    </location>
</feature>
<feature type="active site" evidence="1">
    <location>
        <position position="245"/>
    </location>
</feature>
<feature type="active site" evidence="1">
    <location>
        <position position="268"/>
    </location>
</feature>
<feature type="active site" description="O-(3'-phospho-DNA)-tyrosine intermediate" evidence="1">
    <location>
        <position position="277"/>
    </location>
</feature>
<keyword id="KW-0131">Cell cycle</keyword>
<keyword id="KW-0132">Cell division</keyword>
<keyword id="KW-0159">Chromosome partition</keyword>
<keyword id="KW-0963">Cytoplasm</keyword>
<keyword id="KW-0229">DNA integration</keyword>
<keyword id="KW-0233">DNA recombination</keyword>
<keyword id="KW-0238">DNA-binding</keyword>
<keyword id="KW-1185">Reference proteome</keyword>
<evidence type="ECO:0000255" key="1">
    <source>
        <dbReference type="HAMAP-Rule" id="MF_01808"/>
    </source>
</evidence>
<evidence type="ECO:0000255" key="2">
    <source>
        <dbReference type="PROSITE-ProRule" id="PRU01246"/>
    </source>
</evidence>
<evidence type="ECO:0000255" key="3">
    <source>
        <dbReference type="PROSITE-ProRule" id="PRU01248"/>
    </source>
</evidence>
<reference key="1">
    <citation type="journal article" date="2000" name="Science">
        <title>Complete genome sequence of Neisseria meningitidis serogroup B strain MC58.</title>
        <authorList>
            <person name="Tettelin H."/>
            <person name="Saunders N.J."/>
            <person name="Heidelberg J.F."/>
            <person name="Jeffries A.C."/>
            <person name="Nelson K.E."/>
            <person name="Eisen J.A."/>
            <person name="Ketchum K.A."/>
            <person name="Hood D.W."/>
            <person name="Peden J.F."/>
            <person name="Dodson R.J."/>
            <person name="Nelson W.C."/>
            <person name="Gwinn M.L."/>
            <person name="DeBoy R.T."/>
            <person name="Peterson J.D."/>
            <person name="Hickey E.K."/>
            <person name="Haft D.H."/>
            <person name="Salzberg S.L."/>
            <person name="White O."/>
            <person name="Fleischmann R.D."/>
            <person name="Dougherty B.A."/>
            <person name="Mason T.M."/>
            <person name="Ciecko A."/>
            <person name="Parksey D.S."/>
            <person name="Blair E."/>
            <person name="Cittone H."/>
            <person name="Clark E.B."/>
            <person name="Cotton M.D."/>
            <person name="Utterback T.R."/>
            <person name="Khouri H.M."/>
            <person name="Qin H."/>
            <person name="Vamathevan J.J."/>
            <person name="Gill J."/>
            <person name="Scarlato V."/>
            <person name="Masignani V."/>
            <person name="Pizza M."/>
            <person name="Grandi G."/>
            <person name="Sun L."/>
            <person name="Smith H.O."/>
            <person name="Fraser C.M."/>
            <person name="Moxon E.R."/>
            <person name="Rappuoli R."/>
            <person name="Venter J.C."/>
        </authorList>
    </citation>
    <scope>NUCLEOTIDE SEQUENCE [LARGE SCALE GENOMIC DNA]</scope>
    <source>
        <strain>ATCC BAA-335 / MC58</strain>
    </source>
</reference>
<gene>
    <name evidence="1" type="primary">xerC</name>
    <name type="ordered locus">NMB1868</name>
</gene>
<organism>
    <name type="scientific">Neisseria meningitidis serogroup B (strain ATCC BAA-335 / MC58)</name>
    <dbReference type="NCBI Taxonomy" id="122586"/>
    <lineage>
        <taxon>Bacteria</taxon>
        <taxon>Pseudomonadati</taxon>
        <taxon>Pseudomonadota</taxon>
        <taxon>Betaproteobacteria</taxon>
        <taxon>Neisseriales</taxon>
        <taxon>Neisseriaceae</taxon>
        <taxon>Neisseria</taxon>
    </lineage>
</organism>
<name>XERC_NEIMB</name>
<accession>Q9JXV6</accession>